<comment type="function">
    <text evidence="1">Serine hydrolase involved in the detoxification of formaldehyde. Hydrolyzes S-formylglutathione to glutathione and formate (By similarity).</text>
</comment>
<comment type="catalytic activity">
    <reaction>
        <text>S-formylglutathione + H2O = formate + glutathione + H(+)</text>
        <dbReference type="Rhea" id="RHEA:14961"/>
        <dbReference type="ChEBI" id="CHEBI:15377"/>
        <dbReference type="ChEBI" id="CHEBI:15378"/>
        <dbReference type="ChEBI" id="CHEBI:15740"/>
        <dbReference type="ChEBI" id="CHEBI:57688"/>
        <dbReference type="ChEBI" id="CHEBI:57925"/>
        <dbReference type="EC" id="3.1.2.12"/>
    </reaction>
</comment>
<comment type="similarity">
    <text evidence="2">Belongs to the esterase D family.</text>
</comment>
<name>SFGH2_ECOL5</name>
<sequence length="278" mass="31273">MEMLEEHRCFEGWQQRWRHDSSTLNCPMTFSIFLPPPRDHTPPPVLYWLSGLTCNDENFTTKAGAQRVAAELGIVLVMPDTSPRGEQVANDDGYDLGQGAGFYLNATQPPWATHYRMYDYLRDELPALVQSQFNVSDRCAISGHSMGGHGALIMALKNPGKYTSVSAFAPIVNPCSVPWGIKAFSTYLGEDKNAWLEWDSCALMYASNAQDAIPTLIDQGDNDQFLADQLQPAVLAEAARQKAWPMTLRIQPGYDHSYYFIASFIEDHLRFHAQYLLK</sequence>
<evidence type="ECO:0000250" key="1"/>
<evidence type="ECO:0000305" key="2"/>
<keyword id="KW-0378">Hydrolase</keyword>
<keyword id="KW-0719">Serine esterase</keyword>
<organism>
    <name type="scientific">Escherichia coli O6:K15:H31 (strain 536 / UPEC)</name>
    <dbReference type="NCBI Taxonomy" id="362663"/>
    <lineage>
        <taxon>Bacteria</taxon>
        <taxon>Pseudomonadati</taxon>
        <taxon>Pseudomonadota</taxon>
        <taxon>Gammaproteobacteria</taxon>
        <taxon>Enterobacterales</taxon>
        <taxon>Enterobacteriaceae</taxon>
        <taxon>Escherichia</taxon>
    </lineage>
</organism>
<gene>
    <name type="primary">yeiG</name>
    <name type="ordered locus">ECP_2194</name>
</gene>
<feature type="chain" id="PRO_0000341673" description="S-formylglutathione hydrolase YeiG">
    <location>
        <begin position="1"/>
        <end position="278"/>
    </location>
</feature>
<feature type="active site" description="Charge relay system" evidence="1">
    <location>
        <position position="145"/>
    </location>
</feature>
<feature type="active site" description="Charge relay system" evidence="1">
    <location>
        <position position="223"/>
    </location>
</feature>
<feature type="active site" description="Charge relay system" evidence="1">
    <location>
        <position position="256"/>
    </location>
</feature>
<dbReference type="EC" id="3.1.2.12"/>
<dbReference type="EMBL" id="CP000247">
    <property type="protein sequence ID" value="ABG70193.1"/>
    <property type="molecule type" value="Genomic_DNA"/>
</dbReference>
<dbReference type="RefSeq" id="WP_000425463.1">
    <property type="nucleotide sequence ID" value="NC_008253.1"/>
</dbReference>
<dbReference type="SMR" id="Q0TFT6"/>
<dbReference type="ESTHER" id="ecoli-yeiG">
    <property type="family name" value="A85-EsteraseD-FGH"/>
</dbReference>
<dbReference type="MEROPS" id="S09.A39"/>
<dbReference type="KEGG" id="ecp:ECP_2194"/>
<dbReference type="HOGENOM" id="CLU_056472_0_0_6"/>
<dbReference type="Proteomes" id="UP000009182">
    <property type="component" value="Chromosome"/>
</dbReference>
<dbReference type="GO" id="GO:0005829">
    <property type="term" value="C:cytosol"/>
    <property type="evidence" value="ECO:0007669"/>
    <property type="project" value="TreeGrafter"/>
</dbReference>
<dbReference type="GO" id="GO:0052689">
    <property type="term" value="F:carboxylic ester hydrolase activity"/>
    <property type="evidence" value="ECO:0007669"/>
    <property type="project" value="UniProtKB-KW"/>
</dbReference>
<dbReference type="GO" id="GO:0018738">
    <property type="term" value="F:S-formylglutathione hydrolase activity"/>
    <property type="evidence" value="ECO:0007669"/>
    <property type="project" value="UniProtKB-EC"/>
</dbReference>
<dbReference type="GO" id="GO:0046294">
    <property type="term" value="P:formaldehyde catabolic process"/>
    <property type="evidence" value="ECO:0007669"/>
    <property type="project" value="InterPro"/>
</dbReference>
<dbReference type="FunFam" id="3.40.50.1820:FF:000002">
    <property type="entry name" value="S-formylglutathione hydrolase"/>
    <property type="match status" value="1"/>
</dbReference>
<dbReference type="Gene3D" id="3.40.50.1820">
    <property type="entry name" value="alpha/beta hydrolase"/>
    <property type="match status" value="1"/>
</dbReference>
<dbReference type="InterPro" id="IPR029058">
    <property type="entry name" value="AB_hydrolase_fold"/>
</dbReference>
<dbReference type="InterPro" id="IPR000801">
    <property type="entry name" value="Esterase-like"/>
</dbReference>
<dbReference type="InterPro" id="IPR014186">
    <property type="entry name" value="S-formylglutathione_hydrol"/>
</dbReference>
<dbReference type="NCBIfam" id="TIGR02821">
    <property type="entry name" value="fghA_ester_D"/>
    <property type="match status" value="1"/>
</dbReference>
<dbReference type="PANTHER" id="PTHR10061">
    <property type="entry name" value="S-FORMYLGLUTATHIONE HYDROLASE"/>
    <property type="match status" value="1"/>
</dbReference>
<dbReference type="PANTHER" id="PTHR10061:SF1">
    <property type="entry name" value="S-FORMYLGLUTATHIONE HYDROLASE YEIG"/>
    <property type="match status" value="1"/>
</dbReference>
<dbReference type="Pfam" id="PF00756">
    <property type="entry name" value="Esterase"/>
    <property type="match status" value="1"/>
</dbReference>
<dbReference type="SUPFAM" id="SSF53474">
    <property type="entry name" value="alpha/beta-Hydrolases"/>
    <property type="match status" value="1"/>
</dbReference>
<accession>Q0TFT6</accession>
<proteinExistence type="inferred from homology"/>
<protein>
    <recommendedName>
        <fullName>S-formylglutathione hydrolase YeiG</fullName>
        <shortName>FGH</shortName>
        <ecNumber>3.1.2.12</ecNumber>
    </recommendedName>
</protein>
<reference key="1">
    <citation type="journal article" date="2006" name="Mol. Microbiol.">
        <title>Role of pathogenicity island-associated integrases in the genome plasticity of uropathogenic Escherichia coli strain 536.</title>
        <authorList>
            <person name="Hochhut B."/>
            <person name="Wilde C."/>
            <person name="Balling G."/>
            <person name="Middendorf B."/>
            <person name="Dobrindt U."/>
            <person name="Brzuszkiewicz E."/>
            <person name="Gottschalk G."/>
            <person name="Carniel E."/>
            <person name="Hacker J."/>
        </authorList>
    </citation>
    <scope>NUCLEOTIDE SEQUENCE [LARGE SCALE GENOMIC DNA]</scope>
    <source>
        <strain>536 / UPEC</strain>
    </source>
</reference>